<accession>P24937</accession>
<comment type="function">
    <molecule>Pre-protein VI</molecule>
    <text evidence="2 4">During virus assembly, promotes hexon trimers nuclear import through nuclear pore complexes via an importin alpha/beta-dependent mechanism. By analogy to herpesviruses capsid assembly, might act as a chaperone to promote the formation of the icosahedral capsid.</text>
</comment>
<comment type="function">
    <molecule>Endosome lysis protein</molecule>
    <text evidence="1 2 5 6 7 8 9 10">Structural component of the virion that provides increased stability to the particle shell through its interaction with the core-capsid bridging protein and the hexon-linking protein VIII (PubMed:25071205). Fibers shedding during virus entry into host cell allows the endosome lysis protein to be exposed as a membrane-lytic peptide (By similarity). Exhibits pH-independent membrane fragmentation activity and probably mediates viral rapid escape from host endosome via organellar membrane lysis (PubMed:15681401, PubMed:20409568, PubMed:21209115, PubMed:22516138). It is not clear if it then remains partially associated with the capsid and involved in the intracellular microtubule-dependent transport of capsid to the nucleus, or if it is lost during endosomal penetration (PubMed:20333243).</text>
</comment>
<comment type="function">
    <molecule>Protease cofactor</molecule>
    <text evidence="2">Cofactor that activates the viral protease. Binds to viral protease in a 1:1 ratio.</text>
</comment>
<comment type="subunit">
    <molecule>Pre-protein VI</molecule>
    <text evidence="2 4">Interacts with hexon protein; this interaction allows nuclear import of hexon trimers and possibly pre-capsid assembly (PubMed:14633984). Interacts (via C-terminal NLS) with importin alpha/beta (PubMed:14633984).</text>
</comment>
<comment type="subunit">
    <molecule>Endosome lysis protein</molecule>
    <text evidence="2 6 10">Interacts (via PPxY motif) with host NEDD4 ubiquitine ligase; this interaction might play a role in virus intracellular transport during entry (PubMed:20333243). Part of a complex composed of the core-capsid bridging protein, the endosome lysis protein VI and the hexon-linking protein VIII; these interactions bridge the virus core to the capsid (PubMed:25071205). Interacts with peripentonal hexons; this interaction stabilizes the capsid by gluing two peripentonal hexons together and joining them with an adjacent group-of-nine hexon (PubMed:25071205).</text>
</comment>
<comment type="subunit">
    <molecule>Protease cofactor</molecule>
    <text evidence="2">Heterodimer with the viral protease; disulfide-linked. Interacts with the viral protease.</text>
</comment>
<comment type="subcellular location">
    <molecule>Pre-protein VI</molecule>
    <subcellularLocation>
        <location evidence="2 4">Host nucleus</location>
    </subcellularLocation>
    <subcellularLocation>
        <location evidence="2 4">Host cytoplasm</location>
    </subcellularLocation>
    <text evidence="2 4">Shuttles between host cytoplasm and nucleus.</text>
</comment>
<comment type="subcellular location">
    <molecule>Endosome lysis protein</molecule>
    <subcellularLocation>
        <location evidence="2 10">Virion</location>
    </subcellularLocation>
    <text evidence="2 10">Associates with the base of each peripentonal hexon on the capsid interior. Present in around 360 copies per virion.</text>
</comment>
<comment type="induction">
    <text evidence="2">Expressed in the late phase of the viral replicative cycle.</text>
</comment>
<comment type="domain">
    <text evidence="2 7">N-terminal amphipathic alpha-helix domain is essential for the membrane lytic activity.</text>
</comment>
<comment type="domain">
    <text evidence="2 12">Late-budding domains (L domains) are short sequence motifs essential for viral particle release. They can occur individually or in close proximity within structural proteins. They interacts with sorting cellular proteins of the multivesicular body (MVB) pathway. Most of these proteins are class E vacuolar protein sorting factors belonging to ESCRT-I, ESCRT-II or ESCRT-III complexes. Minor capsid protein 6 contains one L domain: a PPXY motif which binds to the WW domains of HECT (homologous to E6-AP C-terminus) E3 ubiquitin ligases, like NEDD4. In adenoviruses, this motif seems to play a role in microtubule-dependent intracellular trafficking toward the nucleus during virus entry into host cell and in suppression of DAXX-mediated repression of the immediate early E1A promoter.</text>
</comment>
<comment type="PTM">
    <text evidence="2 6">Ubiquitinated by Nedd4 following partial capsid disassembly; which might play a role in intracellular virus movement during entry.</text>
</comment>
<comment type="PTM">
    <molecule>Protease cofactor</molecule>
    <text evidence="2 4">Contains the major nuclear import and export signals. Proteolytically removed during virion maturation. The processing of the C-terminus turns the precursor into a mature viral structural protein and abrogates its ability to promote hexon import and act as a potential chaperone protein.</text>
</comment>
<comment type="miscellaneous">
    <text evidence="2">All late proteins expressed from the major late promoter are produced by alternative splicing and alternative polyadenylation of the same gene giving rise to non-overlapping ORFs. A leader sequence is present in the N-terminus of all these mRNAs and is recognized by the viral shutoff protein to provide expression although conventional translation via ribosome scanning from the cap has been shut off in the host cell.</text>
</comment>
<comment type="similarity">
    <text evidence="2 11">Belongs to the adenoviridae protein VI family.</text>
</comment>
<sequence length="250" mass="26996">MEDINFASLAPRHGSRPFMGNWQDIGTSNMSGGAFSWGSLWSGIKNFGSTVKNYGSKAWNSSTGQMLRDKLKEQNFQQKVVDGLASGISGVVDLANQAVQNKINSKLDPRPPVEEPPPAVETVSPEGRGEKRPRPDREETLVTQIDEPPSYEEALKQGLPTTRPIAPMATGVLGQHTPVTLDLPPPADTQQKPVLPGPTAVVVTRPSRASLRRAASGPRSLRPVASGNWQSTLNSIVGLGVQSLKRRRCF</sequence>
<proteinExistence type="evidence at protein level"/>
<organismHost>
    <name type="scientific">Homo sapiens</name>
    <name type="common">Human</name>
    <dbReference type="NCBI Taxonomy" id="9606"/>
</organismHost>
<protein>
    <recommendedName>
        <fullName evidence="2">Pre-protein VI</fullName>
        <shortName evidence="2">pVI</shortName>
    </recommendedName>
    <component>
        <recommendedName>
            <fullName evidence="2">Endosome lysis protein</fullName>
        </recommendedName>
    </component>
    <component>
        <recommendedName>
            <fullName evidence="2">Protease cofactor</fullName>
        </recommendedName>
        <alternativeName>
            <fullName evidence="2">pVI-C</fullName>
        </alternativeName>
    </component>
</protein>
<reference key="1">
    <citation type="journal article" date="1992" name="Virology">
        <title>The sequence of the genome of adenovirus type 5 and its comparison with the genome of adenovirus type 2.</title>
        <authorList>
            <person name="Chroboczek J."/>
            <person name="Bieber F."/>
            <person name="Jacrot B."/>
        </authorList>
    </citation>
    <scope>NUCLEOTIDE SEQUENCE [GENOMIC DNA]</scope>
</reference>
<reference key="2">
    <citation type="journal article" date="1982" name="J. Gen. Virol.">
        <title>Nucleic acid-binding properties of adenovirus structural polypeptides.</title>
        <authorList>
            <person name="Russell W.C."/>
            <person name="Precious B."/>
        </authorList>
    </citation>
    <scope>DNA-BINDING</scope>
</reference>
<reference key="3">
    <citation type="journal article" date="2003" name="EMBO J.">
        <title>Switch from capsid protein import to adenovirus assembly by cleavage of nuclear transport signals.</title>
        <authorList>
            <person name="Wodrich H."/>
            <person name="Guan T."/>
            <person name="Cingolani G."/>
            <person name="Von Seggern D."/>
            <person name="Nemerow G."/>
            <person name="Gerace L."/>
        </authorList>
    </citation>
    <scope>FUNCTION</scope>
    <scope>SUBCELLULAR LOCATION OF PRE-PROTEIN VI</scope>
    <scope>NUCLEAR LOCALIZATION SIGNALS</scope>
    <scope>NUCLEAR EXPORT SIGNALS</scope>
    <scope>INTERACTION OF PRE-PROTEIN VI WITH IMPORTIN ALPHA/BETA</scope>
    <scope>INTERACTION OF PRE-PROTEIN VI WITH HEXON PROTEIN</scope>
    <scope>PROTEOLYTIC CLEAVAGE</scope>
</reference>
<reference key="4">
    <citation type="journal article" date="2005" name="J. Virol.">
        <title>Adenovirus protein VI mediates membrane disruption following capsid disassembly.</title>
        <authorList>
            <person name="Wiethoff C.M."/>
            <person name="Wodrich H."/>
            <person name="Gerace L."/>
            <person name="Nemerow G.R."/>
        </authorList>
    </citation>
    <scope>FUNCTION OF ENDOSOME LYSIS PROTEIN</scope>
    <scope>DOMAIN</scope>
</reference>
<reference key="5">
    <citation type="journal article" date="2010" name="PLoS Pathog.">
        <title>A capsid-encoded PPxY-motif facilitates adenovirus entry.</title>
        <authorList>
            <person name="Wodrich H."/>
            <person name="Henaff D."/>
            <person name="Jammart B."/>
            <person name="Segura-Morales C."/>
            <person name="Seelmeir S."/>
            <person name="Coux O."/>
            <person name="Ruzsics Z."/>
            <person name="Wiethoff C.M."/>
            <person name="Kremer E.J."/>
        </authorList>
    </citation>
    <scope>FUNCTION</scope>
    <scope>UBIQUITINATION</scope>
    <scope>INTERACTION WITH HOST NEDD4</scope>
    <scope>MUTAGENESIS OF 149-PRO--TYR-151</scope>
    <scope>DOMAIN</scope>
</reference>
<reference key="6">
    <citation type="journal article" date="2010" name="Virology">
        <title>An N-terminal domain of adenovirus protein VI fragments membranes by inducing positive membrane curvature.</title>
        <authorList>
            <person name="Maier O."/>
            <person name="Galan D.L."/>
            <person name="Wodrich H."/>
            <person name="Wiethoff C.M."/>
        </authorList>
    </citation>
    <scope>FUNCTION OF ENDOSOME LYSIS PROTEIN</scope>
</reference>
<reference key="7">
    <citation type="journal article" date="2011" name="J. Virol.">
        <title>Functional genetic and biophysical analyses of membrane disruption by human adenovirus.</title>
        <authorList>
            <person name="Moyer C.L."/>
            <person name="Wiethoff C.M."/>
            <person name="Maier O."/>
            <person name="Smith J.G."/>
            <person name="Nemerow G.R."/>
        </authorList>
    </citation>
    <scope>FUNCTION OF ENDOSOME LYSIS PROTEIN</scope>
    <scope>MUTAGENESIS OF LEU-40</scope>
</reference>
<reference key="8">
    <citation type="journal article" date="2012" name="Virology">
        <title>Disulfide-bond formation by a single cysteine mutation in adenovirus protein VI impairs capsid release and membrane lysis.</title>
        <authorList>
            <person name="Moyer C.L."/>
            <person name="Nemerow G.R."/>
        </authorList>
    </citation>
    <scope>CHARACTERIZATION OF ENDOSOME LYSIS PROTEIN</scope>
    <scope>MUTAGENESIS OF GLY-48</scope>
    <scope>FUNCTION</scope>
</reference>
<reference key="9">
    <citation type="journal article" date="2012" name="Viruses">
        <title>Latest insights on adenovirus structure and assembly.</title>
        <authorList>
            <person name="San Martin C."/>
        </authorList>
    </citation>
    <scope>REVIEW</scope>
</reference>
<reference key="10">
    <citation type="journal article" date="2014" name="Proc. Natl. Acad. Sci. U.S.A.">
        <title>Structures and organization of adenovirus cement proteins provide insights into the role of capsid maturation in virus entry and infection.</title>
        <authorList>
            <person name="Reddy V.S."/>
            <person name="Nemerow G.R."/>
        </authorList>
    </citation>
    <scope>X-RAY CRYSTALLOGRAPHY (3.80 ANGSTROMS)</scope>
    <scope>INTERACTION WITH THE HEXON PROTEIN</scope>
    <scope>IDENTIFICATION IN A COMPLEX WITH THE CORE-CAPSID BRIDGING PROTEIN AND THE HEXON-LINKING PROTEIN VIII</scope>
    <scope>SUBCELLULAR LOCATION</scope>
    <scope>FUNCTION</scope>
</reference>
<evidence type="ECO:0000250" key="1">
    <source>
        <dbReference type="UniProtKB" id="P03274"/>
    </source>
</evidence>
<evidence type="ECO:0000255" key="2">
    <source>
        <dbReference type="HAMAP-Rule" id="MF_04048"/>
    </source>
</evidence>
<evidence type="ECO:0000256" key="3">
    <source>
        <dbReference type="SAM" id="MobiDB-lite"/>
    </source>
</evidence>
<evidence type="ECO:0000269" key="4">
    <source>
    </source>
</evidence>
<evidence type="ECO:0000269" key="5">
    <source>
    </source>
</evidence>
<evidence type="ECO:0000269" key="6">
    <source>
    </source>
</evidence>
<evidence type="ECO:0000269" key="7">
    <source>
    </source>
</evidence>
<evidence type="ECO:0000269" key="8">
    <source>
    </source>
</evidence>
<evidence type="ECO:0000269" key="9">
    <source>
    </source>
</evidence>
<evidence type="ECO:0000269" key="10">
    <source>
    </source>
</evidence>
<evidence type="ECO:0000305" key="11"/>
<evidence type="ECO:0000305" key="12">
    <source>
    </source>
</evidence>
<gene>
    <name evidence="2" type="primary">L3</name>
</gene>
<keyword id="KW-0002">3D-structure</keyword>
<keyword id="KW-0167">Capsid protein</keyword>
<keyword id="KW-1176">Cytoplasmic inwards viral transport</keyword>
<keyword id="KW-1015">Disulfide bond</keyword>
<keyword id="KW-1035">Host cytoplasm</keyword>
<keyword id="KW-1048">Host nucleus</keyword>
<keyword id="KW-0945">Host-virus interaction</keyword>
<keyword id="KW-0426">Late protein</keyword>
<keyword id="KW-1177">Microtubular inwards viral transport</keyword>
<keyword id="KW-0597">Phosphoprotein</keyword>
<keyword id="KW-1185">Reference proteome</keyword>
<keyword id="KW-0832">Ubl conjugation</keyword>
<keyword id="KW-0118">Viral capsid assembly</keyword>
<keyword id="KW-1162">Viral penetration into host cytoplasm</keyword>
<keyword id="KW-1174">Viral penetration via lysis of host organellar membrane</keyword>
<keyword id="KW-1188">Viral release from host cell</keyword>
<keyword id="KW-0946">Virion</keyword>
<keyword id="KW-1160">Virus entry into host cell</keyword>
<dbReference type="EMBL" id="M73260">
    <property type="protein sequence ID" value="AAA96411.1"/>
    <property type="molecule type" value="Genomic_DNA"/>
</dbReference>
<dbReference type="PIR" id="D39449">
    <property type="entry name" value="Q5ADB5"/>
</dbReference>
<dbReference type="RefSeq" id="AP_000210.1">
    <property type="nucleotide sequence ID" value="AC_000008.1"/>
</dbReference>
<dbReference type="PDB" id="6CGV">
    <property type="method" value="X-ray"/>
    <property type="resolution" value="3.80 A"/>
    <property type="chains" value="W=6-29"/>
</dbReference>
<dbReference type="PDB" id="7S78">
    <property type="method" value="EM"/>
    <property type="resolution" value="3.72 A"/>
    <property type="chains" value="0/1/2/3/4/W/X/Y/Z=1-250"/>
</dbReference>
<dbReference type="PDBsum" id="6CGV"/>
<dbReference type="PDBsum" id="7S78"/>
<dbReference type="EMDB" id="EMD-24881"/>
<dbReference type="EMDB" id="EMD-7034"/>
<dbReference type="SMR" id="P24937"/>
<dbReference type="IntAct" id="P24937">
    <property type="interactions" value="1"/>
</dbReference>
<dbReference type="Proteomes" id="UP000004992">
    <property type="component" value="Genome"/>
</dbReference>
<dbReference type="GO" id="GO:0043657">
    <property type="term" value="C:host cell"/>
    <property type="evidence" value="ECO:0007669"/>
    <property type="project" value="GOC"/>
</dbReference>
<dbReference type="GO" id="GO:0030430">
    <property type="term" value="C:host cell cytoplasm"/>
    <property type="evidence" value="ECO:0000314"/>
    <property type="project" value="UniProtKB"/>
</dbReference>
<dbReference type="GO" id="GO:0042025">
    <property type="term" value="C:host cell nucleus"/>
    <property type="evidence" value="ECO:0000314"/>
    <property type="project" value="UniProtKB"/>
</dbReference>
<dbReference type="GO" id="GO:0019028">
    <property type="term" value="C:viral capsid"/>
    <property type="evidence" value="ECO:0007669"/>
    <property type="project" value="UniProtKB-UniRule"/>
</dbReference>
<dbReference type="GO" id="GO:0046729">
    <property type="term" value="C:viral procapsid"/>
    <property type="evidence" value="ECO:0000314"/>
    <property type="project" value="CACAO"/>
</dbReference>
<dbReference type="GO" id="GO:0039664">
    <property type="term" value="P:lysis of host organelle involved in viral entry into host cell"/>
    <property type="evidence" value="ECO:0000314"/>
    <property type="project" value="UniProtKB"/>
</dbReference>
<dbReference type="GO" id="GO:0075521">
    <property type="term" value="P:microtubule-dependent intracellular transport of viral material towards nucleus"/>
    <property type="evidence" value="ECO:0007669"/>
    <property type="project" value="UniProtKB-UniRule"/>
</dbReference>
<dbReference type="GO" id="GO:0098840">
    <property type="term" value="P:protein transport along microtubule"/>
    <property type="evidence" value="ECO:0000314"/>
    <property type="project" value="DisProt"/>
</dbReference>
<dbReference type="GO" id="GO:0019058">
    <property type="term" value="P:viral life cycle"/>
    <property type="evidence" value="ECO:0000314"/>
    <property type="project" value="DisProt"/>
</dbReference>
<dbReference type="GO" id="GO:0019076">
    <property type="term" value="P:viral release from host cell"/>
    <property type="evidence" value="ECO:0000314"/>
    <property type="project" value="DisProt"/>
</dbReference>
<dbReference type="HAMAP" id="MF_04048">
    <property type="entry name" value="ADV_CAP6"/>
    <property type="match status" value="1"/>
</dbReference>
<dbReference type="InterPro" id="IPR004243">
    <property type="entry name" value="McpVI"/>
</dbReference>
<dbReference type="Pfam" id="PF02993">
    <property type="entry name" value="MCPVI"/>
    <property type="match status" value="1"/>
</dbReference>
<organism>
    <name type="scientific">Human adenovirus C serotype 5</name>
    <name type="common">HAdV-5</name>
    <name type="synonym">Human adenovirus 5</name>
    <dbReference type="NCBI Taxonomy" id="28285"/>
    <lineage>
        <taxon>Viruses</taxon>
        <taxon>Varidnaviria</taxon>
        <taxon>Bamfordvirae</taxon>
        <taxon>Preplasmiviricota</taxon>
        <taxon>Tectiliviricetes</taxon>
        <taxon>Rowavirales</taxon>
        <taxon>Adenoviridae</taxon>
        <taxon>Mastadenovirus</taxon>
        <taxon>Human mastadenovirus C</taxon>
    </lineage>
</organism>
<name>CAP6_ADE05</name>
<feature type="chain" id="PRO_0000421133" description="Pre-protein VI" evidence="2">
    <location>
        <begin position="1"/>
        <end position="250"/>
    </location>
</feature>
<feature type="propeptide" id="PRO_0000036546" evidence="2">
    <location>
        <begin position="1"/>
        <end position="33"/>
    </location>
</feature>
<feature type="chain" id="PRO_0000036547" description="Endosome lysis protein" evidence="2">
    <location>
        <begin position="34"/>
        <end position="239"/>
    </location>
</feature>
<feature type="peptide" id="PRO_0000036548" description="Protease cofactor">
    <location>
        <begin position="240"/>
        <end position="250"/>
    </location>
</feature>
<feature type="chain" id="PRO_0000439553" description="Protease cofactor" evidence="2">
    <location>
        <begin position="240"/>
        <end position="250"/>
    </location>
</feature>
<feature type="region of interest" description="Amphipathic alpha-helix essential for membrane lytic activity" evidence="2">
    <location>
        <begin position="34"/>
        <end position="54"/>
    </location>
</feature>
<feature type="region of interest" description="Involved in endosomal membrane lysis" evidence="2">
    <location>
        <begin position="36"/>
        <end position="53"/>
    </location>
</feature>
<feature type="region of interest" description="Interaction with hexon protein" evidence="2">
    <location>
        <begin position="48"/>
        <end position="74"/>
    </location>
</feature>
<feature type="region of interest" description="Disordered" evidence="3">
    <location>
        <begin position="103"/>
        <end position="148"/>
    </location>
</feature>
<feature type="region of interest" description="Interaction with hexon protein" evidence="2">
    <location>
        <begin position="233"/>
        <end position="239"/>
    </location>
</feature>
<feature type="region of interest" description="Binds to importin alpha/beta, involved in hexon nuclear import" evidence="2">
    <location>
        <begin position="240"/>
        <end position="250"/>
    </location>
</feature>
<feature type="short sequence motif" description="Nuclear export signal" evidence="2">
    <location>
        <begin position="67"/>
        <end position="76"/>
    </location>
</feature>
<feature type="short sequence motif" description="Nuclear localization signal" evidence="2">
    <location>
        <begin position="131"/>
        <end position="135"/>
    </location>
</feature>
<feature type="short sequence motif" description="PPXY motif" evidence="2">
    <location>
        <begin position="148"/>
        <end position="151"/>
    </location>
</feature>
<feature type="short sequence motif" description="Nuclear export signal" evidence="2">
    <location>
        <begin position="231"/>
        <end position="242"/>
    </location>
</feature>
<feature type="short sequence motif" description="Nuclear localization signal" evidence="2">
    <location>
        <begin position="245"/>
        <end position="248"/>
    </location>
</feature>
<feature type="compositionally biased region" description="Basic and acidic residues" evidence="3">
    <location>
        <begin position="127"/>
        <end position="140"/>
    </location>
</feature>
<feature type="site" description="Cleavage; by viral protease" evidence="2">
    <location>
        <begin position="33"/>
        <end position="34"/>
    </location>
</feature>
<feature type="site" description="Cleavage; by viral protease" evidence="2">
    <location>
        <begin position="239"/>
        <end position="240"/>
    </location>
</feature>
<feature type="modified residue" description="Phosphoserine; by host" evidence="2">
    <location>
        <position position="124"/>
    </location>
</feature>
<feature type="modified residue" description="Phosphothreonine; by host" evidence="2">
    <location>
        <position position="143"/>
    </location>
</feature>
<feature type="disulfide bond" description="Interchain (with Adenovirus protease)" evidence="2">
    <location>
        <position position="249"/>
    </location>
</feature>
<feature type="mutagenesis site" description="Impaired endosome penetration and reduces infectivity." evidence="8">
    <original>L</original>
    <variation>Q</variation>
    <location>
        <position position="40"/>
    </location>
</feature>
<feature type="mutagenesis site" description="Decreased infectivity and endosomal membrane disruption activity." evidence="9">
    <original>G</original>
    <variation>C</variation>
    <location>
        <position position="48"/>
    </location>
</feature>
<feature type="mutagenesis site" description="No effect on endosomal escape; defective in microtubule-dependent trafficking toward the nucleus." evidence="6">
    <original>PSY</original>
    <variation>GAA</variation>
    <location>
        <begin position="149"/>
        <end position="151"/>
    </location>
</feature>